<comment type="function">
    <text>Sequence-specific transcription factor which is part of a developmental regulatory system that provides cells with specific positional identities on the anterior-posterior axis.</text>
</comment>
<comment type="subcellular location">
    <subcellularLocation>
        <location>Nucleus</location>
    </subcellularLocation>
</comment>
<comment type="alternative products">
    <event type="alternative splicing"/>
    <isoform>
        <id>P04476-1</id>
        <name>1</name>
        <sequence type="displayed"/>
    </isoform>
    <isoform>
        <id>P04476-2</id>
        <name>2</name>
        <name>Homeobox-less</name>
        <sequence type="described" ref="VSP_002390 VSP_002391"/>
    </isoform>
</comment>
<comment type="developmental stage">
    <text>Maternally expressed in oocytes.</text>
</comment>
<comment type="similarity">
    <text evidence="3">Belongs to the Antp homeobox family.</text>
</comment>
<gene>
    <name type="primary">hoxb7-b</name>
    <name type="synonym">hbox2-b</name>
</gene>
<dbReference type="EMBL" id="X07102">
    <property type="protein sequence ID" value="CAA30123.1"/>
    <property type="molecule type" value="mRNA"/>
</dbReference>
<dbReference type="EMBL" id="X06592">
    <property type="protein sequence ID" value="CAA29814.1"/>
    <property type="molecule type" value="mRNA"/>
</dbReference>
<dbReference type="EMBL" id="X06593">
    <property type="protein sequence ID" value="CAA29815.1"/>
    <property type="molecule type" value="mRNA"/>
</dbReference>
<dbReference type="PIR" id="S01063">
    <property type="entry name" value="S01063"/>
</dbReference>
<dbReference type="PIR" id="S01064">
    <property type="entry name" value="S01064"/>
</dbReference>
<dbReference type="SMR" id="P04476"/>
<dbReference type="AGR" id="Xenbase:XB-GENE-6254051"/>
<dbReference type="Xenbase" id="XB-GENE-6254051">
    <property type="gene designation" value="hoxb7.L"/>
</dbReference>
<dbReference type="OMA" id="HPNLPMV"/>
<dbReference type="Proteomes" id="UP000186698">
    <property type="component" value="Unplaced"/>
</dbReference>
<dbReference type="GO" id="GO:0005634">
    <property type="term" value="C:nucleus"/>
    <property type="evidence" value="ECO:0000318"/>
    <property type="project" value="GO_Central"/>
</dbReference>
<dbReference type="GO" id="GO:0000981">
    <property type="term" value="F:DNA-binding transcription factor activity, RNA polymerase II-specific"/>
    <property type="evidence" value="ECO:0000318"/>
    <property type="project" value="GO_Central"/>
</dbReference>
<dbReference type="GO" id="GO:0000978">
    <property type="term" value="F:RNA polymerase II cis-regulatory region sequence-specific DNA binding"/>
    <property type="evidence" value="ECO:0007669"/>
    <property type="project" value="TreeGrafter"/>
</dbReference>
<dbReference type="GO" id="GO:0000977">
    <property type="term" value="F:RNA polymerase II transcription regulatory region sequence-specific DNA binding"/>
    <property type="evidence" value="ECO:0000318"/>
    <property type="project" value="GO_Central"/>
</dbReference>
<dbReference type="GO" id="GO:0009952">
    <property type="term" value="P:anterior/posterior pattern specification"/>
    <property type="evidence" value="ECO:0007669"/>
    <property type="project" value="TreeGrafter"/>
</dbReference>
<dbReference type="GO" id="GO:0006357">
    <property type="term" value="P:regulation of transcription by RNA polymerase II"/>
    <property type="evidence" value="ECO:0000318"/>
    <property type="project" value="GO_Central"/>
</dbReference>
<dbReference type="CDD" id="cd00086">
    <property type="entry name" value="homeodomain"/>
    <property type="match status" value="1"/>
</dbReference>
<dbReference type="FunFam" id="1.10.10.60:FF:000017">
    <property type="entry name" value="Homeobox protein antennapedia"/>
    <property type="match status" value="1"/>
</dbReference>
<dbReference type="Gene3D" id="1.10.10.60">
    <property type="entry name" value="Homeodomain-like"/>
    <property type="match status" value="1"/>
</dbReference>
<dbReference type="InterPro" id="IPR050296">
    <property type="entry name" value="Antp_homeobox"/>
</dbReference>
<dbReference type="InterPro" id="IPR001356">
    <property type="entry name" value="HD"/>
</dbReference>
<dbReference type="InterPro" id="IPR020479">
    <property type="entry name" value="HD_metazoa"/>
</dbReference>
<dbReference type="InterPro" id="IPR017995">
    <property type="entry name" value="Homeobox_antennapedia"/>
</dbReference>
<dbReference type="InterPro" id="IPR001827">
    <property type="entry name" value="Homeobox_Antennapedia_CS"/>
</dbReference>
<dbReference type="InterPro" id="IPR017970">
    <property type="entry name" value="Homeobox_CS"/>
</dbReference>
<dbReference type="InterPro" id="IPR009057">
    <property type="entry name" value="Homeodomain-like_sf"/>
</dbReference>
<dbReference type="PANTHER" id="PTHR45659">
    <property type="entry name" value="HOMEOBOX PROTEIN HOX"/>
    <property type="match status" value="1"/>
</dbReference>
<dbReference type="PANTHER" id="PTHR45659:SF11">
    <property type="entry name" value="HOMEOBOX PROTEIN HOX-B7"/>
    <property type="match status" value="1"/>
</dbReference>
<dbReference type="Pfam" id="PF00046">
    <property type="entry name" value="Homeodomain"/>
    <property type="match status" value="1"/>
</dbReference>
<dbReference type="PRINTS" id="PR00025">
    <property type="entry name" value="ANTENNAPEDIA"/>
</dbReference>
<dbReference type="PRINTS" id="PR00024">
    <property type="entry name" value="HOMEOBOX"/>
</dbReference>
<dbReference type="SMART" id="SM00389">
    <property type="entry name" value="HOX"/>
    <property type="match status" value="1"/>
</dbReference>
<dbReference type="SUPFAM" id="SSF46689">
    <property type="entry name" value="Homeodomain-like"/>
    <property type="match status" value="1"/>
</dbReference>
<dbReference type="PROSITE" id="PS00032">
    <property type="entry name" value="ANTENNAPEDIA"/>
    <property type="match status" value="1"/>
</dbReference>
<dbReference type="PROSITE" id="PS00027">
    <property type="entry name" value="HOMEOBOX_1"/>
    <property type="match status" value="1"/>
</dbReference>
<dbReference type="PROSITE" id="PS50071">
    <property type="entry name" value="HOMEOBOX_2"/>
    <property type="match status" value="1"/>
</dbReference>
<sequence>MSSLYYANALFSKYPTATSVFPSGVFSEQTSCAFASSPQRSGYGNSPGGTFPAGSAAHGLFSNGSSLHPQSPAMYPSSYGLDAASFNMHCSPFEQNLSSLMCDPTKQNCTKAEQRDSELHNEANLRIYPWMRSAGSDRKRGRQTYTRYQTLELEKEFHFNRYLTRRRRIEIAHTLCLTERQIKIWFQNRRMKWKKENKASSPSSNSQEKPETEEEEEEEE</sequence>
<evidence type="ECO:0000255" key="1">
    <source>
        <dbReference type="PROSITE-ProRule" id="PRU00108"/>
    </source>
</evidence>
<evidence type="ECO:0000256" key="2">
    <source>
        <dbReference type="SAM" id="MobiDB-lite"/>
    </source>
</evidence>
<evidence type="ECO:0000305" key="3"/>
<proteinExistence type="evidence at transcript level"/>
<keyword id="KW-0025">Alternative splicing</keyword>
<keyword id="KW-0217">Developmental protein</keyword>
<keyword id="KW-0238">DNA-binding</keyword>
<keyword id="KW-0371">Homeobox</keyword>
<keyword id="KW-0539">Nucleus</keyword>
<keyword id="KW-1185">Reference proteome</keyword>
<keyword id="KW-0804">Transcription</keyword>
<keyword id="KW-0805">Transcription regulation</keyword>
<organism>
    <name type="scientific">Xenopus laevis</name>
    <name type="common">African clawed frog</name>
    <dbReference type="NCBI Taxonomy" id="8355"/>
    <lineage>
        <taxon>Eukaryota</taxon>
        <taxon>Metazoa</taxon>
        <taxon>Chordata</taxon>
        <taxon>Craniata</taxon>
        <taxon>Vertebrata</taxon>
        <taxon>Euteleostomi</taxon>
        <taxon>Amphibia</taxon>
        <taxon>Batrachia</taxon>
        <taxon>Anura</taxon>
        <taxon>Pipoidea</taxon>
        <taxon>Pipidae</taxon>
        <taxon>Xenopodinae</taxon>
        <taxon>Xenopus</taxon>
        <taxon>Xenopus</taxon>
    </lineage>
</organism>
<protein>
    <recommendedName>
        <fullName>Homeobox protein Hox-B7-B</fullName>
    </recommendedName>
    <alternativeName>
        <fullName>P52</fullName>
    </alternativeName>
    <alternativeName>
        <fullName>XlHbox-2 B</fullName>
    </alternativeName>
</protein>
<name>HXB7B_XENLA</name>
<feature type="chain" id="PRO_0000200147" description="Homeobox protein Hox-B7-B">
    <location>
        <begin position="1"/>
        <end position="220"/>
    </location>
</feature>
<feature type="DNA-binding region" description="Homeobox" evidence="1">
    <location>
        <begin position="138"/>
        <end position="197"/>
    </location>
</feature>
<feature type="region of interest" description="Disordered" evidence="2">
    <location>
        <begin position="195"/>
        <end position="220"/>
    </location>
</feature>
<feature type="short sequence motif" description="Antp-type hexapeptide">
    <location>
        <begin position="127"/>
        <end position="132"/>
    </location>
</feature>
<feature type="compositionally biased region" description="Acidic residues" evidence="2">
    <location>
        <begin position="211"/>
        <end position="220"/>
    </location>
</feature>
<feature type="splice variant" id="VSP_002390" description="In isoform 2." evidence="3">
    <original>GSDRKRGRQTYT</original>
    <variation>DPVMMKVSSKPL</variation>
    <location>
        <begin position="135"/>
        <end position="146"/>
    </location>
</feature>
<feature type="splice variant" id="VSP_002391" description="In isoform 2." evidence="3">
    <location>
        <begin position="147"/>
        <end position="220"/>
    </location>
</feature>
<reference key="1">
    <citation type="journal article" date="1987" name="EMBO J.">
        <title>A Xenopus laevis gene encodes both homeobox-containing and homeobox-less transcripts.</title>
        <authorList>
            <person name="Wright C.V.E."/>
            <person name="Cho K.W.Y."/>
            <person name="Fritz A."/>
            <person name="Buerglin T.R."/>
            <person name="De Robertis E.M."/>
        </authorList>
    </citation>
    <scope>NUCLEOTIDE SEQUENCE [MRNA]</scope>
</reference>
<reference key="2">
    <citation type="journal article" date="1988" name="Nucleic Acids Res.">
        <title>Xenopus homeobox-containing cDNAs expressed in early development.</title>
        <authorList>
            <person name="Fritz A."/>
            <person name="De Robertis E.M."/>
        </authorList>
    </citation>
    <scope>NUCLEOTIDE SEQUENCE [MRNA] OF 119-220</scope>
</reference>
<accession>P04476</accession>
<accession>P09018</accession>